<comment type="subcellular location">
    <subcellularLocation>
        <location evidence="1">Cytoplasm</location>
    </subcellularLocation>
    <subcellularLocation>
        <location evidence="1">Nucleus</location>
    </subcellularLocation>
</comment>
<evidence type="ECO:0000269" key="1">
    <source>
    </source>
</evidence>
<accession>O74793</accession>
<feature type="chain" id="PRO_0000315974" description="Uncharacterized protein C26H8.11c">
    <location>
        <begin position="1"/>
        <end position="175"/>
    </location>
</feature>
<sequence>MPETKLVALPEFQELKSNDEYISMQPYKGEDNKSYIANLVRHNALTFCPYYFIEKSGKGSVVYFHPTSDLCGYKNIVHGGFITTMLDEALAFGVFPNFPSKMGVTVQLDTTYVAPALCSHLYKIVTKTTKVEGRKCWTSGELLRLNGSEPPVLCAKASGFFVEPSKLNLEHHVKK</sequence>
<dbReference type="EMBL" id="CU329671">
    <property type="protein sequence ID" value="CAA21103.1"/>
    <property type="molecule type" value="Genomic_DNA"/>
</dbReference>
<dbReference type="PIR" id="T40023">
    <property type="entry name" value="T40023"/>
</dbReference>
<dbReference type="SMR" id="O74793"/>
<dbReference type="BioGRID" id="276905">
    <property type="interactions" value="6"/>
</dbReference>
<dbReference type="iPTMnet" id="O74793"/>
<dbReference type="PaxDb" id="4896-SPBC26H8.11c.1"/>
<dbReference type="EnsemblFungi" id="SPBC26H8.11c.1">
    <property type="protein sequence ID" value="SPBC26H8.11c.1:pep"/>
    <property type="gene ID" value="SPBC26H8.11c"/>
</dbReference>
<dbReference type="KEGG" id="spo:2540376"/>
<dbReference type="PomBase" id="SPBC26H8.11c"/>
<dbReference type="VEuPathDB" id="FungiDB:SPBC26H8.11c"/>
<dbReference type="eggNOG" id="KOG4781">
    <property type="taxonomic scope" value="Eukaryota"/>
</dbReference>
<dbReference type="HOGENOM" id="CLU_052827_2_1_1"/>
<dbReference type="InParanoid" id="O74793"/>
<dbReference type="OMA" id="PYKSEEN"/>
<dbReference type="PhylomeDB" id="O74793"/>
<dbReference type="PRO" id="PR:O74793"/>
<dbReference type="Proteomes" id="UP000002485">
    <property type="component" value="Chromosome II"/>
</dbReference>
<dbReference type="GO" id="GO:0005829">
    <property type="term" value="C:cytosol"/>
    <property type="evidence" value="ECO:0007005"/>
    <property type="project" value="PomBase"/>
</dbReference>
<dbReference type="GO" id="GO:0005739">
    <property type="term" value="C:mitochondrion"/>
    <property type="evidence" value="ECO:0000250"/>
    <property type="project" value="PomBase"/>
</dbReference>
<dbReference type="GO" id="GO:0005634">
    <property type="term" value="C:nucleus"/>
    <property type="evidence" value="ECO:0007005"/>
    <property type="project" value="PomBase"/>
</dbReference>
<dbReference type="GO" id="GO:0047617">
    <property type="term" value="F:fatty acyl-CoA hydrolase activity"/>
    <property type="evidence" value="ECO:0000250"/>
    <property type="project" value="PomBase"/>
</dbReference>
<dbReference type="GO" id="GO:0006633">
    <property type="term" value="P:fatty acid biosynthetic process"/>
    <property type="evidence" value="ECO:0000305"/>
    <property type="project" value="PomBase"/>
</dbReference>
<dbReference type="GO" id="GO:0035338">
    <property type="term" value="P:long-chain fatty-acyl-CoA biosynthetic process"/>
    <property type="evidence" value="ECO:0000250"/>
    <property type="project" value="PomBase"/>
</dbReference>
<dbReference type="CDD" id="cd03443">
    <property type="entry name" value="PaaI_thioesterase"/>
    <property type="match status" value="1"/>
</dbReference>
<dbReference type="FunFam" id="3.10.129.10:FF:000190">
    <property type="entry name" value="UPF0644 protein PB2B4.06"/>
    <property type="match status" value="1"/>
</dbReference>
<dbReference type="Gene3D" id="3.10.129.10">
    <property type="entry name" value="Hotdog Thioesterase"/>
    <property type="match status" value="1"/>
</dbReference>
<dbReference type="InterPro" id="IPR029069">
    <property type="entry name" value="HotDog_dom_sf"/>
</dbReference>
<dbReference type="InterPro" id="IPR052061">
    <property type="entry name" value="PTE-AB_protein"/>
</dbReference>
<dbReference type="InterPro" id="IPR006683">
    <property type="entry name" value="Thioestr_dom"/>
</dbReference>
<dbReference type="PANTHER" id="PTHR47260">
    <property type="entry name" value="UPF0644 PROTEIN PB2B4.06"/>
    <property type="match status" value="1"/>
</dbReference>
<dbReference type="PANTHER" id="PTHR47260:SF1">
    <property type="entry name" value="UPF0644 PROTEIN PB2B4.06"/>
    <property type="match status" value="1"/>
</dbReference>
<dbReference type="Pfam" id="PF03061">
    <property type="entry name" value="4HBT"/>
    <property type="match status" value="1"/>
</dbReference>
<dbReference type="SUPFAM" id="SSF54637">
    <property type="entry name" value="Thioesterase/thiol ester dehydrase-isomerase"/>
    <property type="match status" value="1"/>
</dbReference>
<dbReference type="PROSITE" id="PS00307">
    <property type="entry name" value="LECTIN_LEGUME_BETA"/>
    <property type="match status" value="1"/>
</dbReference>
<keyword id="KW-0963">Cytoplasm</keyword>
<keyword id="KW-0539">Nucleus</keyword>
<keyword id="KW-1185">Reference proteome</keyword>
<proteinExistence type="predicted"/>
<organism>
    <name type="scientific">Schizosaccharomyces pombe (strain 972 / ATCC 24843)</name>
    <name type="common">Fission yeast</name>
    <dbReference type="NCBI Taxonomy" id="284812"/>
    <lineage>
        <taxon>Eukaryota</taxon>
        <taxon>Fungi</taxon>
        <taxon>Dikarya</taxon>
        <taxon>Ascomycota</taxon>
        <taxon>Taphrinomycotina</taxon>
        <taxon>Schizosaccharomycetes</taxon>
        <taxon>Schizosaccharomycetales</taxon>
        <taxon>Schizosaccharomycetaceae</taxon>
        <taxon>Schizosaccharomyces</taxon>
    </lineage>
</organism>
<protein>
    <recommendedName>
        <fullName>Uncharacterized protein C26H8.11c</fullName>
    </recommendedName>
</protein>
<reference key="1">
    <citation type="journal article" date="2002" name="Nature">
        <title>The genome sequence of Schizosaccharomyces pombe.</title>
        <authorList>
            <person name="Wood V."/>
            <person name="Gwilliam R."/>
            <person name="Rajandream M.A."/>
            <person name="Lyne M.H."/>
            <person name="Lyne R."/>
            <person name="Stewart A."/>
            <person name="Sgouros J.G."/>
            <person name="Peat N."/>
            <person name="Hayles J."/>
            <person name="Baker S.G."/>
            <person name="Basham D."/>
            <person name="Bowman S."/>
            <person name="Brooks K."/>
            <person name="Brown D."/>
            <person name="Brown S."/>
            <person name="Chillingworth T."/>
            <person name="Churcher C.M."/>
            <person name="Collins M."/>
            <person name="Connor R."/>
            <person name="Cronin A."/>
            <person name="Davis P."/>
            <person name="Feltwell T."/>
            <person name="Fraser A."/>
            <person name="Gentles S."/>
            <person name="Goble A."/>
            <person name="Hamlin N."/>
            <person name="Harris D.E."/>
            <person name="Hidalgo J."/>
            <person name="Hodgson G."/>
            <person name="Holroyd S."/>
            <person name="Hornsby T."/>
            <person name="Howarth S."/>
            <person name="Huckle E.J."/>
            <person name="Hunt S."/>
            <person name="Jagels K."/>
            <person name="James K.D."/>
            <person name="Jones L."/>
            <person name="Jones M."/>
            <person name="Leather S."/>
            <person name="McDonald S."/>
            <person name="McLean J."/>
            <person name="Mooney P."/>
            <person name="Moule S."/>
            <person name="Mungall K.L."/>
            <person name="Murphy L.D."/>
            <person name="Niblett D."/>
            <person name="Odell C."/>
            <person name="Oliver K."/>
            <person name="O'Neil S."/>
            <person name="Pearson D."/>
            <person name="Quail M.A."/>
            <person name="Rabbinowitsch E."/>
            <person name="Rutherford K.M."/>
            <person name="Rutter S."/>
            <person name="Saunders D."/>
            <person name="Seeger K."/>
            <person name="Sharp S."/>
            <person name="Skelton J."/>
            <person name="Simmonds M.N."/>
            <person name="Squares R."/>
            <person name="Squares S."/>
            <person name="Stevens K."/>
            <person name="Taylor K."/>
            <person name="Taylor R.G."/>
            <person name="Tivey A."/>
            <person name="Walsh S.V."/>
            <person name="Warren T."/>
            <person name="Whitehead S."/>
            <person name="Woodward J.R."/>
            <person name="Volckaert G."/>
            <person name="Aert R."/>
            <person name="Robben J."/>
            <person name="Grymonprez B."/>
            <person name="Weltjens I."/>
            <person name="Vanstreels E."/>
            <person name="Rieger M."/>
            <person name="Schaefer M."/>
            <person name="Mueller-Auer S."/>
            <person name="Gabel C."/>
            <person name="Fuchs M."/>
            <person name="Duesterhoeft A."/>
            <person name="Fritzc C."/>
            <person name="Holzer E."/>
            <person name="Moestl D."/>
            <person name="Hilbert H."/>
            <person name="Borzym K."/>
            <person name="Langer I."/>
            <person name="Beck A."/>
            <person name="Lehrach H."/>
            <person name="Reinhardt R."/>
            <person name="Pohl T.M."/>
            <person name="Eger P."/>
            <person name="Zimmermann W."/>
            <person name="Wedler H."/>
            <person name="Wambutt R."/>
            <person name="Purnelle B."/>
            <person name="Goffeau A."/>
            <person name="Cadieu E."/>
            <person name="Dreano S."/>
            <person name="Gloux S."/>
            <person name="Lelaure V."/>
            <person name="Mottier S."/>
            <person name="Galibert F."/>
            <person name="Aves S.J."/>
            <person name="Xiang Z."/>
            <person name="Hunt C."/>
            <person name="Moore K."/>
            <person name="Hurst S.M."/>
            <person name="Lucas M."/>
            <person name="Rochet M."/>
            <person name="Gaillardin C."/>
            <person name="Tallada V.A."/>
            <person name="Garzon A."/>
            <person name="Thode G."/>
            <person name="Daga R.R."/>
            <person name="Cruzado L."/>
            <person name="Jimenez J."/>
            <person name="Sanchez M."/>
            <person name="del Rey F."/>
            <person name="Benito J."/>
            <person name="Dominguez A."/>
            <person name="Revuelta J.L."/>
            <person name="Moreno S."/>
            <person name="Armstrong J."/>
            <person name="Forsburg S.L."/>
            <person name="Cerutti L."/>
            <person name="Lowe T."/>
            <person name="McCombie W.R."/>
            <person name="Paulsen I."/>
            <person name="Potashkin J."/>
            <person name="Shpakovski G.V."/>
            <person name="Ussery D."/>
            <person name="Barrell B.G."/>
            <person name="Nurse P."/>
        </authorList>
    </citation>
    <scope>NUCLEOTIDE SEQUENCE [LARGE SCALE GENOMIC DNA]</scope>
    <source>
        <strain>972 / ATCC 24843</strain>
    </source>
</reference>
<reference key="2">
    <citation type="journal article" date="2006" name="Nat. Biotechnol.">
        <title>ORFeome cloning and global analysis of protein localization in the fission yeast Schizosaccharomyces pombe.</title>
        <authorList>
            <person name="Matsuyama A."/>
            <person name="Arai R."/>
            <person name="Yashiroda Y."/>
            <person name="Shirai A."/>
            <person name="Kamata A."/>
            <person name="Sekido S."/>
            <person name="Kobayashi Y."/>
            <person name="Hashimoto A."/>
            <person name="Hamamoto M."/>
            <person name="Hiraoka Y."/>
            <person name="Horinouchi S."/>
            <person name="Yoshida M."/>
        </authorList>
    </citation>
    <scope>SUBCELLULAR LOCATION [LARGE SCALE ANALYSIS]</scope>
</reference>
<name>YOUB_SCHPO</name>
<gene>
    <name type="ORF">SPBC26H8.11c</name>
</gene>